<reference key="1">
    <citation type="journal article" date="1982" name="Eur. J. Biochem.">
        <title>Cucumber mosaic virus RNA 3. Determination of the nucleotide sequence provides the amino acid sequences of protein 3A and viral coat protein.</title>
        <authorList>
            <person name="Gould A.R."/>
            <person name="Symons R.H."/>
        </authorList>
    </citation>
    <scope>NUCLEOTIDE SEQUENCE [GENOMIC RNA]</scope>
</reference>
<reference key="2">
    <citation type="journal article" date="1988" name="Virology">
        <title>Further implications for the evolutionary relationships between tripartite plant viruses based on cucumber mosaic virus RNA 3.</title>
        <authorList>
            <person name="Davies C."/>
            <person name="Symons R.H."/>
        </authorList>
    </citation>
    <scope>NUCLEOTIDE SEQUENCE [GENOMIC RNA]</scope>
    <scope>PARTIAL PROTEIN SEQUENCE</scope>
    <scope>SEQUENCE REVISION</scope>
</reference>
<reference key="3">
    <citation type="journal article" date="1982" name="J. Biochem.">
        <title>Micro-identification of amino-terminal acetylamino acids in proteins.</title>
        <authorList>
            <person name="Tsunasawa S."/>
            <person name="Narita K."/>
        </authorList>
    </citation>
    <scope>ACETYLATION AT MET-1</scope>
</reference>
<keyword id="KW-0007">Acetylation</keyword>
<keyword id="KW-0167">Capsid protein</keyword>
<keyword id="KW-0903">Direct protein sequencing</keyword>
<keyword id="KW-0687">Ribonucleoprotein</keyword>
<keyword id="KW-0694">RNA-binding</keyword>
<keyword id="KW-1142">T=3 icosahedral capsid protein</keyword>
<keyword id="KW-0543">Viral nucleoprotein</keyword>
<keyword id="KW-0946">Virion</keyword>
<sequence>MDKSGSPNASRTSRRRRPRRGSRSASGADAGLRALTQQMLRLNKTLAIGRPTLNHPTFVGSESCKPGYTFTSITLKPPEIEKGSYFGRRLSLPDSVTDYDKKLVSRIQIRINPLPKFDSTVWVTVRKVPSSSDLSVAAISAMFGDGNSPVLVYQYAASGVQANNKLLYDLSEMRADIGDMRKYAVLVYSKDDKLEKDEIVLHVDVEHQRIPISRMLPT</sequence>
<evidence type="ECO:0000250" key="1"/>
<evidence type="ECO:0000256" key="2">
    <source>
        <dbReference type="SAM" id="MobiDB-lite"/>
    </source>
</evidence>
<evidence type="ECO:0000269" key="3">
    <source>
    </source>
</evidence>
<evidence type="ECO:0000305" key="4"/>
<accession>P03605</accession>
<dbReference type="EMBL" id="M21464">
    <property type="protein sequence ID" value="AAA46416.1"/>
    <property type="molecule type" value="Genomic_RNA"/>
</dbReference>
<dbReference type="PIR" id="JA0108">
    <property type="entry name" value="VCVXUV"/>
</dbReference>
<dbReference type="SMR" id="P03605"/>
<dbReference type="iPTMnet" id="P03605"/>
<dbReference type="Proteomes" id="UP000008454">
    <property type="component" value="Genome"/>
</dbReference>
<dbReference type="GO" id="GO:1990904">
    <property type="term" value="C:ribonucleoprotein complex"/>
    <property type="evidence" value="ECO:0007669"/>
    <property type="project" value="UniProtKB-KW"/>
</dbReference>
<dbReference type="GO" id="GO:0039617">
    <property type="term" value="C:T=3 icosahedral viral capsid"/>
    <property type="evidence" value="ECO:0007669"/>
    <property type="project" value="UniProtKB-KW"/>
</dbReference>
<dbReference type="GO" id="GO:0019013">
    <property type="term" value="C:viral nucleocapsid"/>
    <property type="evidence" value="ECO:0007669"/>
    <property type="project" value="UniProtKB-KW"/>
</dbReference>
<dbReference type="GO" id="GO:0003723">
    <property type="term" value="F:RNA binding"/>
    <property type="evidence" value="ECO:0007669"/>
    <property type="project" value="UniProtKB-KW"/>
</dbReference>
<dbReference type="GO" id="GO:0005198">
    <property type="term" value="F:structural molecule activity"/>
    <property type="evidence" value="ECO:0007669"/>
    <property type="project" value="InterPro"/>
</dbReference>
<dbReference type="Gene3D" id="2.60.120.530">
    <property type="entry name" value="Cucumovirus coat protein, subunit A"/>
    <property type="match status" value="1"/>
</dbReference>
<dbReference type="InterPro" id="IPR000247">
    <property type="entry name" value="Cucumovirus_coat"/>
</dbReference>
<dbReference type="InterPro" id="IPR037137">
    <property type="entry name" value="Cucumovirus_coat_Asu_sf"/>
</dbReference>
<dbReference type="Pfam" id="PF00760">
    <property type="entry name" value="Cucumo_coat"/>
    <property type="match status" value="1"/>
</dbReference>
<dbReference type="PRINTS" id="PR00222">
    <property type="entry name" value="CUCUMOCOAT"/>
</dbReference>
<dbReference type="SUPFAM" id="SSF88633">
    <property type="entry name" value="Positive stranded ssRNA viruses"/>
    <property type="match status" value="1"/>
</dbReference>
<name>CAPSD_CMVQ</name>
<organism>
    <name type="scientific">Cucumber mosaic virus (strain Q)</name>
    <name type="common">CMV</name>
    <dbReference type="NCBI Taxonomy" id="12310"/>
    <lineage>
        <taxon>Viruses</taxon>
        <taxon>Riboviria</taxon>
        <taxon>Orthornavirae</taxon>
        <taxon>Kitrinoviricota</taxon>
        <taxon>Alsuviricetes</taxon>
        <taxon>Martellivirales</taxon>
        <taxon>Bromoviridae</taxon>
        <taxon>Cucumovirus</taxon>
        <taxon>Cucumber mosaic virus</taxon>
    </lineage>
</organism>
<gene>
    <name type="ORF">ORF3b</name>
</gene>
<protein>
    <recommendedName>
        <fullName>Capsid protein</fullName>
        <shortName>CP</shortName>
    </recommendedName>
    <alternativeName>
        <fullName>Coat protein</fullName>
    </alternativeName>
</protein>
<comment type="function">
    <text evidence="1">Capsid protein. Probably binds RNA and plays a role in packaging (By similarity).</text>
</comment>
<comment type="subcellular location">
    <subcellularLocation>
        <location evidence="4">Virion</location>
    </subcellularLocation>
</comment>
<comment type="domain">
    <text evidence="1">The N-terminal arginine-rich stretch does not seem to be the major RNA-binding region that allows formation of an infectious ribonucleoprotein complex.</text>
</comment>
<comment type="similarity">
    <text evidence="4">Belongs to the cucumovirus capsid protein family.</text>
</comment>
<feature type="chain" id="PRO_0000083218" description="Capsid protein">
    <location>
        <begin position="1"/>
        <end position="218"/>
    </location>
</feature>
<feature type="region of interest" description="Disordered" evidence="2">
    <location>
        <begin position="1"/>
        <end position="30"/>
    </location>
</feature>
<feature type="compositionally biased region" description="Basic residues" evidence="2">
    <location>
        <begin position="12"/>
        <end position="22"/>
    </location>
</feature>
<feature type="modified residue" description="N-acetylmethionine; by host" evidence="3">
    <location>
        <position position="1"/>
    </location>
</feature>
<organismHost>
    <name type="scientific">Cucumis sativus</name>
    <name type="common">Cucumber</name>
    <dbReference type="NCBI Taxonomy" id="3659"/>
</organismHost>
<organismHost>
    <name type="scientific">Nicotiana tabacum</name>
    <name type="common">Common tobacco</name>
    <dbReference type="NCBI Taxonomy" id="4097"/>
</organismHost>
<organismHost>
    <name type="scientific">Solanum lycopersicum</name>
    <name type="common">Tomato</name>
    <name type="synonym">Lycopersicon esculentum</name>
    <dbReference type="NCBI Taxonomy" id="4081"/>
</organismHost>
<proteinExistence type="evidence at protein level"/>